<feature type="chain" id="PRO_0000262052" description="UPF0246 protein RD1_0358">
    <location>
        <begin position="1"/>
        <end position="259"/>
    </location>
</feature>
<comment type="similarity">
    <text evidence="1">Belongs to the UPF0246 family.</text>
</comment>
<reference key="1">
    <citation type="journal article" date="2007" name="J. Bacteriol.">
        <title>The complete genome sequence of Roseobacter denitrificans reveals a mixotrophic rather than photosynthetic metabolism.</title>
        <authorList>
            <person name="Swingley W.D."/>
            <person name="Sadekar S."/>
            <person name="Mastrian S.D."/>
            <person name="Matthies H.J."/>
            <person name="Hao J."/>
            <person name="Ramos H."/>
            <person name="Acharya C.R."/>
            <person name="Conrad A.L."/>
            <person name="Taylor H.L."/>
            <person name="Dejesa L.C."/>
            <person name="Shah M.K."/>
            <person name="O'Huallachain M.E."/>
            <person name="Lince M.T."/>
            <person name="Blankenship R.E."/>
            <person name="Beatty J.T."/>
            <person name="Touchman J.W."/>
        </authorList>
    </citation>
    <scope>NUCLEOTIDE SEQUENCE [LARGE SCALE GENOMIC DNA]</scope>
    <source>
        <strain>ATCC 33942 / OCh 114</strain>
    </source>
</reference>
<gene>
    <name type="ordered locus">RD1_0358</name>
</gene>
<evidence type="ECO:0000255" key="1">
    <source>
        <dbReference type="HAMAP-Rule" id="MF_00652"/>
    </source>
</evidence>
<dbReference type="EMBL" id="CP000362">
    <property type="protein sequence ID" value="ABG30079.1"/>
    <property type="molecule type" value="Genomic_DNA"/>
</dbReference>
<dbReference type="RefSeq" id="WP_011566701.1">
    <property type="nucleotide sequence ID" value="NC_008209.1"/>
</dbReference>
<dbReference type="SMR" id="Q16D64"/>
<dbReference type="STRING" id="375451.RD1_0358"/>
<dbReference type="KEGG" id="rde:RD1_0358"/>
<dbReference type="eggNOG" id="COG3022">
    <property type="taxonomic scope" value="Bacteria"/>
</dbReference>
<dbReference type="HOGENOM" id="CLU_061989_0_0_5"/>
<dbReference type="OrthoDB" id="9777133at2"/>
<dbReference type="Proteomes" id="UP000007029">
    <property type="component" value="Chromosome"/>
</dbReference>
<dbReference type="GO" id="GO:0005829">
    <property type="term" value="C:cytosol"/>
    <property type="evidence" value="ECO:0007669"/>
    <property type="project" value="TreeGrafter"/>
</dbReference>
<dbReference type="GO" id="GO:0033194">
    <property type="term" value="P:response to hydroperoxide"/>
    <property type="evidence" value="ECO:0007669"/>
    <property type="project" value="TreeGrafter"/>
</dbReference>
<dbReference type="HAMAP" id="MF_00652">
    <property type="entry name" value="UPF0246"/>
    <property type="match status" value="1"/>
</dbReference>
<dbReference type="InterPro" id="IPR005583">
    <property type="entry name" value="YaaA"/>
</dbReference>
<dbReference type="NCBIfam" id="NF002542">
    <property type="entry name" value="PRK02101.1-3"/>
    <property type="match status" value="1"/>
</dbReference>
<dbReference type="PANTHER" id="PTHR30283:SF4">
    <property type="entry name" value="PEROXIDE STRESS RESISTANCE PROTEIN YAAA"/>
    <property type="match status" value="1"/>
</dbReference>
<dbReference type="PANTHER" id="PTHR30283">
    <property type="entry name" value="PEROXIDE STRESS RESPONSE PROTEIN YAAA"/>
    <property type="match status" value="1"/>
</dbReference>
<dbReference type="Pfam" id="PF03883">
    <property type="entry name" value="H2O2_YaaD"/>
    <property type="match status" value="1"/>
</dbReference>
<sequence>MLVVISPAKRLDWAERDVPVTQPDFQEDAVRLSKTARNLTLGSLKSLMGLSDDLARLNRDRFNAFAEDPAPEATRPAALAFAGDTYQGLEATSLDENERAWAQDHLRILSGLYGVLRPLDAIQPYRLEMGSRLKTRRGSNLYEYWRDDLSKALNAQAQSVGTDVLINCASQEYFGAVAPKALKLRVITPAFMEDKNDGKGPKIVSFFAKKARGAMARFVIQNRLSDPDALTGFDTGGYAYQPELSTPDKPVFIRPYPAS</sequence>
<proteinExistence type="inferred from homology"/>
<protein>
    <recommendedName>
        <fullName evidence="1">UPF0246 protein RD1_0358</fullName>
    </recommendedName>
</protein>
<keyword id="KW-1185">Reference proteome</keyword>
<name>Y358_ROSDO</name>
<organism>
    <name type="scientific">Roseobacter denitrificans (strain ATCC 33942 / OCh 114)</name>
    <name type="common">Erythrobacter sp. (strain OCh 114)</name>
    <name type="synonym">Roseobacter denitrificans</name>
    <dbReference type="NCBI Taxonomy" id="375451"/>
    <lineage>
        <taxon>Bacteria</taxon>
        <taxon>Pseudomonadati</taxon>
        <taxon>Pseudomonadota</taxon>
        <taxon>Alphaproteobacteria</taxon>
        <taxon>Rhodobacterales</taxon>
        <taxon>Roseobacteraceae</taxon>
        <taxon>Roseobacter</taxon>
    </lineage>
</organism>
<accession>Q16D64</accession>